<feature type="chain" id="PRO_0000231442" description="Putative pterin-4-alpha-carbinolamine dehydratase">
    <location>
        <begin position="1"/>
        <end position="97"/>
    </location>
</feature>
<sequence length="97" mass="11054">MARNRLTESEMNEALRALDGWQKVDGREAITRSFKFKDFSTAFGFMAQAALYAEKLDHHPEWFNAYNRVDVTLATHSENGVTELDIKMARKMNAIAG</sequence>
<comment type="catalytic activity">
    <reaction evidence="1">
        <text>(4aS,6R)-4a-hydroxy-L-erythro-5,6,7,8-tetrahydrobiopterin = (6R)-L-erythro-6,7-dihydrobiopterin + H2O</text>
        <dbReference type="Rhea" id="RHEA:11920"/>
        <dbReference type="ChEBI" id="CHEBI:15377"/>
        <dbReference type="ChEBI" id="CHEBI:15642"/>
        <dbReference type="ChEBI" id="CHEBI:43120"/>
        <dbReference type="EC" id="4.2.1.96"/>
    </reaction>
</comment>
<comment type="similarity">
    <text evidence="1">Belongs to the pterin-4-alpha-carbinolamine dehydratase family.</text>
</comment>
<accession>Q2YNV0</accession>
<keyword id="KW-0456">Lyase</keyword>
<keyword id="KW-1185">Reference proteome</keyword>
<name>PHS_BRUA2</name>
<proteinExistence type="inferred from homology"/>
<protein>
    <recommendedName>
        <fullName evidence="1">Putative pterin-4-alpha-carbinolamine dehydratase</fullName>
        <shortName evidence="1">PHS</shortName>
        <ecNumber evidence="1">4.2.1.96</ecNumber>
    </recommendedName>
    <alternativeName>
        <fullName evidence="1">4-alpha-hydroxy-tetrahydropterin dehydratase</fullName>
    </alternativeName>
    <alternativeName>
        <fullName evidence="1">Pterin carbinolamine dehydratase</fullName>
        <shortName evidence="1">PCD</shortName>
    </alternativeName>
</protein>
<gene>
    <name type="ordered locus">BAB1_0077</name>
</gene>
<dbReference type="EC" id="4.2.1.96" evidence="1"/>
<dbReference type="EMBL" id="AM040264">
    <property type="protein sequence ID" value="CAJ10033.1"/>
    <property type="molecule type" value="Genomic_DNA"/>
</dbReference>
<dbReference type="RefSeq" id="WP_002965330.1">
    <property type="nucleotide sequence ID" value="NZ_KN046823.1"/>
</dbReference>
<dbReference type="SMR" id="Q2YNV0"/>
<dbReference type="STRING" id="359391.BAB1_0077"/>
<dbReference type="KEGG" id="bmf:BAB1_0077"/>
<dbReference type="PATRIC" id="fig|359391.11.peg.1501"/>
<dbReference type="HOGENOM" id="CLU_081974_3_2_5"/>
<dbReference type="Proteomes" id="UP000002719">
    <property type="component" value="Chromosome I"/>
</dbReference>
<dbReference type="GO" id="GO:0008124">
    <property type="term" value="F:4-alpha-hydroxytetrahydrobiopterin dehydratase activity"/>
    <property type="evidence" value="ECO:0007669"/>
    <property type="project" value="UniProtKB-UniRule"/>
</dbReference>
<dbReference type="GO" id="GO:0006729">
    <property type="term" value="P:tetrahydrobiopterin biosynthetic process"/>
    <property type="evidence" value="ECO:0007669"/>
    <property type="project" value="InterPro"/>
</dbReference>
<dbReference type="CDD" id="cd00914">
    <property type="entry name" value="PCD_DCoH_subfamily_b"/>
    <property type="match status" value="1"/>
</dbReference>
<dbReference type="Gene3D" id="3.30.1360.20">
    <property type="entry name" value="Transcriptional coactivator/pterin dehydratase"/>
    <property type="match status" value="1"/>
</dbReference>
<dbReference type="HAMAP" id="MF_00434">
    <property type="entry name" value="Pterin_4_alpha"/>
    <property type="match status" value="1"/>
</dbReference>
<dbReference type="InterPro" id="IPR036428">
    <property type="entry name" value="PCD_sf"/>
</dbReference>
<dbReference type="InterPro" id="IPR001533">
    <property type="entry name" value="Pterin_deHydtase"/>
</dbReference>
<dbReference type="NCBIfam" id="NF002017">
    <property type="entry name" value="PRK00823.1-2"/>
    <property type="match status" value="1"/>
</dbReference>
<dbReference type="NCBIfam" id="NF002018">
    <property type="entry name" value="PRK00823.1-3"/>
    <property type="match status" value="1"/>
</dbReference>
<dbReference type="PANTHER" id="PTHR12599">
    <property type="entry name" value="PTERIN-4-ALPHA-CARBINOLAMINE DEHYDRATASE"/>
    <property type="match status" value="1"/>
</dbReference>
<dbReference type="PANTHER" id="PTHR12599:SF0">
    <property type="entry name" value="PTERIN-4-ALPHA-CARBINOLAMINE DEHYDRATASE"/>
    <property type="match status" value="1"/>
</dbReference>
<dbReference type="Pfam" id="PF01329">
    <property type="entry name" value="Pterin_4a"/>
    <property type="match status" value="1"/>
</dbReference>
<dbReference type="SUPFAM" id="SSF55248">
    <property type="entry name" value="PCD-like"/>
    <property type="match status" value="1"/>
</dbReference>
<organism>
    <name type="scientific">Brucella abortus (strain 2308)</name>
    <dbReference type="NCBI Taxonomy" id="359391"/>
    <lineage>
        <taxon>Bacteria</taxon>
        <taxon>Pseudomonadati</taxon>
        <taxon>Pseudomonadota</taxon>
        <taxon>Alphaproteobacteria</taxon>
        <taxon>Hyphomicrobiales</taxon>
        <taxon>Brucellaceae</taxon>
        <taxon>Brucella/Ochrobactrum group</taxon>
        <taxon>Brucella</taxon>
    </lineage>
</organism>
<evidence type="ECO:0000255" key="1">
    <source>
        <dbReference type="HAMAP-Rule" id="MF_00434"/>
    </source>
</evidence>
<reference key="1">
    <citation type="journal article" date="2005" name="Infect. Immun.">
        <title>Whole-genome analyses of speciation events in pathogenic Brucellae.</title>
        <authorList>
            <person name="Chain P.S."/>
            <person name="Comerci D.J."/>
            <person name="Tolmasky M.E."/>
            <person name="Larimer F.W."/>
            <person name="Malfatti S.A."/>
            <person name="Vergez L.M."/>
            <person name="Aguero F."/>
            <person name="Land M.L."/>
            <person name="Ugalde R.A."/>
            <person name="Garcia E."/>
        </authorList>
    </citation>
    <scope>NUCLEOTIDE SEQUENCE [LARGE SCALE GENOMIC DNA]</scope>
    <source>
        <strain>2308</strain>
    </source>
</reference>